<organism>
    <name type="scientific">Methylobacillus flagellatus (strain ATCC 51484 / DSM 6875 / VKM B-1610 / KT)</name>
    <dbReference type="NCBI Taxonomy" id="265072"/>
    <lineage>
        <taxon>Bacteria</taxon>
        <taxon>Pseudomonadati</taxon>
        <taxon>Pseudomonadota</taxon>
        <taxon>Betaproteobacteria</taxon>
        <taxon>Nitrosomonadales</taxon>
        <taxon>Methylophilaceae</taxon>
        <taxon>Methylobacillus</taxon>
    </lineage>
</organism>
<protein>
    <recommendedName>
        <fullName evidence="1">Protein GrpE</fullName>
    </recommendedName>
    <alternativeName>
        <fullName evidence="1">HSP-70 cofactor</fullName>
    </alternativeName>
</protein>
<proteinExistence type="inferred from homology"/>
<sequence>MQHEDKTPEQQENKTPETELQQENAPATPQEAGAAGSIDDRIAELEAKLAEQQAAVLYAKAEGENIRRRAAEDIEKARKFALEKFSSELLAVKDSLDAALNVGSATLESYRDGVELTAKQLTAVFEKFSIVEINPVGEKFDPNKHQAIGTVESEAESNTVVNVLQKGYTLNDRVLRPALVMVAK</sequence>
<name>GRPE_METFK</name>
<reference key="1">
    <citation type="submission" date="2006-03" db="EMBL/GenBank/DDBJ databases">
        <title>Complete sequence of Methylobacillus flagellatus KT.</title>
        <authorList>
            <consortium name="US DOE Joint Genome Institute"/>
            <person name="Copeland A."/>
            <person name="Lucas S."/>
            <person name="Lapidus A."/>
            <person name="Barry K."/>
            <person name="Detter J.C."/>
            <person name="Glavina del Rio T."/>
            <person name="Hammon N."/>
            <person name="Israni S."/>
            <person name="Dalin E."/>
            <person name="Tice H."/>
            <person name="Pitluck S."/>
            <person name="Brettin T."/>
            <person name="Bruce D."/>
            <person name="Han C."/>
            <person name="Tapia R."/>
            <person name="Saunders E."/>
            <person name="Gilna P."/>
            <person name="Schmutz J."/>
            <person name="Larimer F."/>
            <person name="Land M."/>
            <person name="Kyrpides N."/>
            <person name="Anderson I."/>
            <person name="Richardson P."/>
        </authorList>
    </citation>
    <scope>NUCLEOTIDE SEQUENCE [LARGE SCALE GENOMIC DNA]</scope>
    <source>
        <strain>ATCC 51484 / DSM 6875 / VKM B-1610 / KT</strain>
    </source>
</reference>
<gene>
    <name evidence="1" type="primary">grpE</name>
    <name type="ordered locus">Mfla_0752</name>
</gene>
<feature type="chain" id="PRO_1000053604" description="Protein GrpE">
    <location>
        <begin position="1"/>
        <end position="184"/>
    </location>
</feature>
<feature type="region of interest" description="Disordered" evidence="2">
    <location>
        <begin position="1"/>
        <end position="39"/>
    </location>
</feature>
<feature type="compositionally biased region" description="Basic and acidic residues" evidence="2">
    <location>
        <begin position="1"/>
        <end position="17"/>
    </location>
</feature>
<feature type="compositionally biased region" description="Polar residues" evidence="2">
    <location>
        <begin position="18"/>
        <end position="27"/>
    </location>
</feature>
<evidence type="ECO:0000255" key="1">
    <source>
        <dbReference type="HAMAP-Rule" id="MF_01151"/>
    </source>
</evidence>
<evidence type="ECO:0000256" key="2">
    <source>
        <dbReference type="SAM" id="MobiDB-lite"/>
    </source>
</evidence>
<accession>Q1H3B7</accession>
<keyword id="KW-0143">Chaperone</keyword>
<keyword id="KW-0963">Cytoplasm</keyword>
<keyword id="KW-1185">Reference proteome</keyword>
<keyword id="KW-0346">Stress response</keyword>
<dbReference type="EMBL" id="CP000284">
    <property type="protein sequence ID" value="ABE49020.1"/>
    <property type="molecule type" value="Genomic_DNA"/>
</dbReference>
<dbReference type="RefSeq" id="WP_011479117.1">
    <property type="nucleotide sequence ID" value="NC_007947.1"/>
</dbReference>
<dbReference type="SMR" id="Q1H3B7"/>
<dbReference type="STRING" id="265072.Mfla_0752"/>
<dbReference type="KEGG" id="mfa:Mfla_0752"/>
<dbReference type="eggNOG" id="COG0576">
    <property type="taxonomic scope" value="Bacteria"/>
</dbReference>
<dbReference type="HOGENOM" id="CLU_057217_6_1_4"/>
<dbReference type="OrthoDB" id="9789811at2"/>
<dbReference type="Proteomes" id="UP000002440">
    <property type="component" value="Chromosome"/>
</dbReference>
<dbReference type="GO" id="GO:0005829">
    <property type="term" value="C:cytosol"/>
    <property type="evidence" value="ECO:0007669"/>
    <property type="project" value="TreeGrafter"/>
</dbReference>
<dbReference type="GO" id="GO:0000774">
    <property type="term" value="F:adenyl-nucleotide exchange factor activity"/>
    <property type="evidence" value="ECO:0007669"/>
    <property type="project" value="InterPro"/>
</dbReference>
<dbReference type="GO" id="GO:0042803">
    <property type="term" value="F:protein homodimerization activity"/>
    <property type="evidence" value="ECO:0007669"/>
    <property type="project" value="InterPro"/>
</dbReference>
<dbReference type="GO" id="GO:0051087">
    <property type="term" value="F:protein-folding chaperone binding"/>
    <property type="evidence" value="ECO:0007669"/>
    <property type="project" value="InterPro"/>
</dbReference>
<dbReference type="GO" id="GO:0051082">
    <property type="term" value="F:unfolded protein binding"/>
    <property type="evidence" value="ECO:0007669"/>
    <property type="project" value="TreeGrafter"/>
</dbReference>
<dbReference type="GO" id="GO:0006457">
    <property type="term" value="P:protein folding"/>
    <property type="evidence" value="ECO:0007669"/>
    <property type="project" value="InterPro"/>
</dbReference>
<dbReference type="CDD" id="cd00446">
    <property type="entry name" value="GrpE"/>
    <property type="match status" value="1"/>
</dbReference>
<dbReference type="FunFam" id="2.30.22.10:FF:000001">
    <property type="entry name" value="Protein GrpE"/>
    <property type="match status" value="1"/>
</dbReference>
<dbReference type="Gene3D" id="3.90.20.20">
    <property type="match status" value="1"/>
</dbReference>
<dbReference type="Gene3D" id="2.30.22.10">
    <property type="entry name" value="Head domain of nucleotide exchange factor GrpE"/>
    <property type="match status" value="1"/>
</dbReference>
<dbReference type="HAMAP" id="MF_01151">
    <property type="entry name" value="GrpE"/>
    <property type="match status" value="1"/>
</dbReference>
<dbReference type="InterPro" id="IPR000740">
    <property type="entry name" value="GrpE"/>
</dbReference>
<dbReference type="InterPro" id="IPR013805">
    <property type="entry name" value="GrpE_coiled_coil"/>
</dbReference>
<dbReference type="InterPro" id="IPR009012">
    <property type="entry name" value="GrpE_head"/>
</dbReference>
<dbReference type="NCBIfam" id="NF010737">
    <property type="entry name" value="PRK14139.1"/>
    <property type="match status" value="1"/>
</dbReference>
<dbReference type="NCBIfam" id="NF010738">
    <property type="entry name" value="PRK14140.1"/>
    <property type="match status" value="1"/>
</dbReference>
<dbReference type="NCBIfam" id="NF010748">
    <property type="entry name" value="PRK14150.1"/>
    <property type="match status" value="1"/>
</dbReference>
<dbReference type="PANTHER" id="PTHR21237">
    <property type="entry name" value="GRPE PROTEIN"/>
    <property type="match status" value="1"/>
</dbReference>
<dbReference type="PANTHER" id="PTHR21237:SF23">
    <property type="entry name" value="GRPE PROTEIN HOMOLOG, MITOCHONDRIAL"/>
    <property type="match status" value="1"/>
</dbReference>
<dbReference type="Pfam" id="PF01025">
    <property type="entry name" value="GrpE"/>
    <property type="match status" value="1"/>
</dbReference>
<dbReference type="PRINTS" id="PR00773">
    <property type="entry name" value="GRPEPROTEIN"/>
</dbReference>
<dbReference type="SUPFAM" id="SSF58014">
    <property type="entry name" value="Coiled-coil domain of nucleotide exchange factor GrpE"/>
    <property type="match status" value="1"/>
</dbReference>
<dbReference type="SUPFAM" id="SSF51064">
    <property type="entry name" value="Head domain of nucleotide exchange factor GrpE"/>
    <property type="match status" value="1"/>
</dbReference>
<dbReference type="PROSITE" id="PS01071">
    <property type="entry name" value="GRPE"/>
    <property type="match status" value="1"/>
</dbReference>
<comment type="function">
    <text evidence="1">Participates actively in the response to hyperosmotic and heat shock by preventing the aggregation of stress-denatured proteins, in association with DnaK and GrpE. It is the nucleotide exchange factor for DnaK and may function as a thermosensor. Unfolded proteins bind initially to DnaJ; upon interaction with the DnaJ-bound protein, DnaK hydrolyzes its bound ATP, resulting in the formation of a stable complex. GrpE releases ADP from DnaK; ATP binding to DnaK triggers the release of the substrate protein, thus completing the reaction cycle. Several rounds of ATP-dependent interactions between DnaJ, DnaK and GrpE are required for fully efficient folding.</text>
</comment>
<comment type="subunit">
    <text evidence="1">Homodimer.</text>
</comment>
<comment type="subcellular location">
    <subcellularLocation>
        <location evidence="1">Cytoplasm</location>
    </subcellularLocation>
</comment>
<comment type="similarity">
    <text evidence="1">Belongs to the GrpE family.</text>
</comment>